<gene>
    <name evidence="1" type="primary">def</name>
    <name type="ordered locus">PGN_2068</name>
</gene>
<proteinExistence type="inferred from homology"/>
<sequence>MLLPIYLYGHPVLRKVAEDITPDYPKLKELIANMTESMYHSDGIGLAAPQIGLPIRVLVIDADPLKEDYPECAGFKRVMINAHIEERGEDLCTEYEGCLSLPAIHEKVERPTSIRIRYVDEDFQPHEEVLHGFAARVVQHEYDHIDGKLFIDHISPIRKQLIKGKLQNIIKGKVRTSYRVVTAPTGKRR</sequence>
<dbReference type="EC" id="3.5.1.88" evidence="1"/>
<dbReference type="EMBL" id="AP009380">
    <property type="protein sequence ID" value="BAG34586.1"/>
    <property type="molecule type" value="Genomic_DNA"/>
</dbReference>
<dbReference type="RefSeq" id="WP_012458729.1">
    <property type="nucleotide sequence ID" value="NC_010729.1"/>
</dbReference>
<dbReference type="SMR" id="B2RMJ1"/>
<dbReference type="GeneID" id="29257205"/>
<dbReference type="KEGG" id="pgn:PGN_2068"/>
<dbReference type="eggNOG" id="COG0242">
    <property type="taxonomic scope" value="Bacteria"/>
</dbReference>
<dbReference type="HOGENOM" id="CLU_061901_2_0_10"/>
<dbReference type="OrthoDB" id="9784988at2"/>
<dbReference type="BioCyc" id="PGIN431947:G1G2V-2303-MONOMER"/>
<dbReference type="Proteomes" id="UP000008842">
    <property type="component" value="Chromosome"/>
</dbReference>
<dbReference type="GO" id="GO:0046872">
    <property type="term" value="F:metal ion binding"/>
    <property type="evidence" value="ECO:0007669"/>
    <property type="project" value="UniProtKB-KW"/>
</dbReference>
<dbReference type="GO" id="GO:0042586">
    <property type="term" value="F:peptide deformylase activity"/>
    <property type="evidence" value="ECO:0007669"/>
    <property type="project" value="UniProtKB-UniRule"/>
</dbReference>
<dbReference type="GO" id="GO:0043686">
    <property type="term" value="P:co-translational protein modification"/>
    <property type="evidence" value="ECO:0007669"/>
    <property type="project" value="TreeGrafter"/>
</dbReference>
<dbReference type="GO" id="GO:0006412">
    <property type="term" value="P:translation"/>
    <property type="evidence" value="ECO:0007669"/>
    <property type="project" value="UniProtKB-UniRule"/>
</dbReference>
<dbReference type="CDD" id="cd00487">
    <property type="entry name" value="Pep_deformylase"/>
    <property type="match status" value="1"/>
</dbReference>
<dbReference type="Gene3D" id="3.90.45.10">
    <property type="entry name" value="Peptide deformylase"/>
    <property type="match status" value="1"/>
</dbReference>
<dbReference type="HAMAP" id="MF_00163">
    <property type="entry name" value="Pep_deformylase"/>
    <property type="match status" value="1"/>
</dbReference>
<dbReference type="InterPro" id="IPR023635">
    <property type="entry name" value="Peptide_deformylase"/>
</dbReference>
<dbReference type="InterPro" id="IPR036821">
    <property type="entry name" value="Peptide_deformylase_sf"/>
</dbReference>
<dbReference type="NCBIfam" id="TIGR00079">
    <property type="entry name" value="pept_deformyl"/>
    <property type="match status" value="1"/>
</dbReference>
<dbReference type="NCBIfam" id="NF001159">
    <property type="entry name" value="PRK00150.1-3"/>
    <property type="match status" value="1"/>
</dbReference>
<dbReference type="PANTHER" id="PTHR10458">
    <property type="entry name" value="PEPTIDE DEFORMYLASE"/>
    <property type="match status" value="1"/>
</dbReference>
<dbReference type="PANTHER" id="PTHR10458:SF22">
    <property type="entry name" value="PEPTIDE DEFORMYLASE"/>
    <property type="match status" value="1"/>
</dbReference>
<dbReference type="Pfam" id="PF01327">
    <property type="entry name" value="Pep_deformylase"/>
    <property type="match status" value="1"/>
</dbReference>
<dbReference type="PIRSF" id="PIRSF004749">
    <property type="entry name" value="Pep_def"/>
    <property type="match status" value="1"/>
</dbReference>
<dbReference type="PRINTS" id="PR01576">
    <property type="entry name" value="PDEFORMYLASE"/>
</dbReference>
<dbReference type="SUPFAM" id="SSF56420">
    <property type="entry name" value="Peptide deformylase"/>
    <property type="match status" value="1"/>
</dbReference>
<comment type="function">
    <text evidence="1">Removes the formyl group from the N-terminal Met of newly synthesized proteins. Requires at least a dipeptide for an efficient rate of reaction. N-terminal L-methionine is a prerequisite for activity but the enzyme has broad specificity at other positions.</text>
</comment>
<comment type="catalytic activity">
    <reaction evidence="1">
        <text>N-terminal N-formyl-L-methionyl-[peptide] + H2O = N-terminal L-methionyl-[peptide] + formate</text>
        <dbReference type="Rhea" id="RHEA:24420"/>
        <dbReference type="Rhea" id="RHEA-COMP:10639"/>
        <dbReference type="Rhea" id="RHEA-COMP:10640"/>
        <dbReference type="ChEBI" id="CHEBI:15377"/>
        <dbReference type="ChEBI" id="CHEBI:15740"/>
        <dbReference type="ChEBI" id="CHEBI:49298"/>
        <dbReference type="ChEBI" id="CHEBI:64731"/>
        <dbReference type="EC" id="3.5.1.88"/>
    </reaction>
</comment>
<comment type="cofactor">
    <cofactor evidence="1">
        <name>Fe(2+)</name>
        <dbReference type="ChEBI" id="CHEBI:29033"/>
    </cofactor>
    <text evidence="1">Binds 1 Fe(2+) ion.</text>
</comment>
<comment type="similarity">
    <text evidence="1">Belongs to the polypeptide deformylase family.</text>
</comment>
<name>DEF_PORG3</name>
<organism>
    <name type="scientific">Porphyromonas gingivalis (strain ATCC 33277 / DSM 20709 / CIP 103683 / JCM 12257 / NCTC 11834 / 2561)</name>
    <dbReference type="NCBI Taxonomy" id="431947"/>
    <lineage>
        <taxon>Bacteria</taxon>
        <taxon>Pseudomonadati</taxon>
        <taxon>Bacteroidota</taxon>
        <taxon>Bacteroidia</taxon>
        <taxon>Bacteroidales</taxon>
        <taxon>Porphyromonadaceae</taxon>
        <taxon>Porphyromonas</taxon>
    </lineage>
</organism>
<keyword id="KW-0378">Hydrolase</keyword>
<keyword id="KW-0408">Iron</keyword>
<keyword id="KW-0479">Metal-binding</keyword>
<keyword id="KW-0648">Protein biosynthesis</keyword>
<accession>B2RMJ1</accession>
<evidence type="ECO:0000255" key="1">
    <source>
        <dbReference type="HAMAP-Rule" id="MF_00163"/>
    </source>
</evidence>
<reference key="1">
    <citation type="journal article" date="2008" name="DNA Res.">
        <title>Determination of the genome sequence of Porphyromonas gingivalis strain ATCC 33277 and genomic comparison with strain W83 revealed extensive genome rearrangements in P. gingivalis.</title>
        <authorList>
            <person name="Naito M."/>
            <person name="Hirakawa H."/>
            <person name="Yamashita A."/>
            <person name="Ohara N."/>
            <person name="Shoji M."/>
            <person name="Yukitake H."/>
            <person name="Nakayama K."/>
            <person name="Toh H."/>
            <person name="Yoshimura F."/>
            <person name="Kuhara S."/>
            <person name="Hattori M."/>
            <person name="Hayashi T."/>
            <person name="Nakayama K."/>
        </authorList>
    </citation>
    <scope>NUCLEOTIDE SEQUENCE [LARGE SCALE GENOMIC DNA]</scope>
    <source>
        <strain>ATCC 33277 / DSM 20709 / CIP 103683 / JCM 12257 / NCTC 11834 / 2561</strain>
    </source>
</reference>
<feature type="chain" id="PRO_1000097333" description="Peptide deformylase">
    <location>
        <begin position="1"/>
        <end position="189"/>
    </location>
</feature>
<feature type="active site" evidence="1">
    <location>
        <position position="141"/>
    </location>
</feature>
<feature type="binding site" evidence="1">
    <location>
        <position position="98"/>
    </location>
    <ligand>
        <name>Fe cation</name>
        <dbReference type="ChEBI" id="CHEBI:24875"/>
    </ligand>
</feature>
<feature type="binding site" evidence="1">
    <location>
        <position position="140"/>
    </location>
    <ligand>
        <name>Fe cation</name>
        <dbReference type="ChEBI" id="CHEBI:24875"/>
    </ligand>
</feature>
<feature type="binding site" evidence="1">
    <location>
        <position position="144"/>
    </location>
    <ligand>
        <name>Fe cation</name>
        <dbReference type="ChEBI" id="CHEBI:24875"/>
    </ligand>
</feature>
<protein>
    <recommendedName>
        <fullName evidence="1">Peptide deformylase</fullName>
        <shortName evidence="1">PDF</shortName>
        <ecNumber evidence="1">3.5.1.88</ecNumber>
    </recommendedName>
    <alternativeName>
        <fullName evidence="1">Polypeptide deformylase</fullName>
    </alternativeName>
</protein>